<sequence length="281" mass="30729">MELNHEYGIMNTTPNIHAMIVAAGRGSRFGASIPKQYTLLQGQTLLQHSVARLAESAYIYQCLLVVAADDSTAQTLSFALPIYYAVGGAERWQSVQAGVEAMINAGADEADLVVIHDAARPAVPTHDIDAVIQAAMLEPYGAILATPVADTLKQSYIAANILSMPVHEAVLPHQHTQPELTINESDRDALHAYAQKTIDRSHMWQAQTPQVFRLGPLQQVLNYVAEHNLAITDEASAFEHLELPIRLVMGSRQNIKLTYPDDSILLTAILMAQFSSIVEIL</sequence>
<accession>Q4FR76</accession>
<protein>
    <recommendedName>
        <fullName evidence="1">2-C-methyl-D-erythritol 4-phosphate cytidylyltransferase</fullName>
        <ecNumber evidence="1">2.7.7.60</ecNumber>
    </recommendedName>
    <alternativeName>
        <fullName evidence="1">4-diphosphocytidyl-2C-methyl-D-erythritol synthase</fullName>
    </alternativeName>
    <alternativeName>
        <fullName evidence="1">MEP cytidylyltransferase</fullName>
        <shortName evidence="1">MCT</shortName>
    </alternativeName>
</protein>
<gene>
    <name evidence="1" type="primary">ispD</name>
    <name type="ordered locus">Psyc_1634</name>
</gene>
<reference key="1">
    <citation type="journal article" date="2010" name="Appl. Environ. Microbiol.">
        <title>The genome sequence of Psychrobacter arcticus 273-4, a psychroactive Siberian permafrost bacterium, reveals mechanisms for adaptation to low-temperature growth.</title>
        <authorList>
            <person name="Ayala-del-Rio H.L."/>
            <person name="Chain P.S."/>
            <person name="Grzymski J.J."/>
            <person name="Ponder M.A."/>
            <person name="Ivanova N."/>
            <person name="Bergholz P.W."/>
            <person name="Di Bartolo G."/>
            <person name="Hauser L."/>
            <person name="Land M."/>
            <person name="Bakermans C."/>
            <person name="Rodrigues D."/>
            <person name="Klappenbach J."/>
            <person name="Zarka D."/>
            <person name="Larimer F."/>
            <person name="Richardson P."/>
            <person name="Murray A."/>
            <person name="Thomashow M."/>
            <person name="Tiedje J.M."/>
        </authorList>
    </citation>
    <scope>NUCLEOTIDE SEQUENCE [LARGE SCALE GENOMIC DNA]</scope>
    <source>
        <strain>DSM 17307 / VKM B-2377 / 273-4</strain>
    </source>
</reference>
<comment type="function">
    <text evidence="1">Catalyzes the formation of 4-diphosphocytidyl-2-C-methyl-D-erythritol from CTP and 2-C-methyl-D-erythritol 4-phosphate (MEP).</text>
</comment>
<comment type="catalytic activity">
    <reaction evidence="1">
        <text>2-C-methyl-D-erythritol 4-phosphate + CTP + H(+) = 4-CDP-2-C-methyl-D-erythritol + diphosphate</text>
        <dbReference type="Rhea" id="RHEA:13429"/>
        <dbReference type="ChEBI" id="CHEBI:15378"/>
        <dbReference type="ChEBI" id="CHEBI:33019"/>
        <dbReference type="ChEBI" id="CHEBI:37563"/>
        <dbReference type="ChEBI" id="CHEBI:57823"/>
        <dbReference type="ChEBI" id="CHEBI:58262"/>
        <dbReference type="EC" id="2.7.7.60"/>
    </reaction>
</comment>
<comment type="pathway">
    <text evidence="1">Isoprenoid biosynthesis; isopentenyl diphosphate biosynthesis via DXP pathway; isopentenyl diphosphate from 1-deoxy-D-xylulose 5-phosphate: step 2/6.</text>
</comment>
<comment type="similarity">
    <text evidence="1">Belongs to the IspD/TarI cytidylyltransferase family. IspD subfamily.</text>
</comment>
<organism>
    <name type="scientific">Psychrobacter arcticus (strain DSM 17307 / VKM B-2377 / 273-4)</name>
    <dbReference type="NCBI Taxonomy" id="259536"/>
    <lineage>
        <taxon>Bacteria</taxon>
        <taxon>Pseudomonadati</taxon>
        <taxon>Pseudomonadota</taxon>
        <taxon>Gammaproteobacteria</taxon>
        <taxon>Moraxellales</taxon>
        <taxon>Moraxellaceae</taxon>
        <taxon>Psychrobacter</taxon>
    </lineage>
</organism>
<dbReference type="EC" id="2.7.7.60" evidence="1"/>
<dbReference type="EMBL" id="CP000082">
    <property type="protein sequence ID" value="AAZ19482.1"/>
    <property type="molecule type" value="Genomic_DNA"/>
</dbReference>
<dbReference type="RefSeq" id="WP_011280898.1">
    <property type="nucleotide sequence ID" value="NC_007204.1"/>
</dbReference>
<dbReference type="SMR" id="Q4FR76"/>
<dbReference type="STRING" id="259536.Psyc_1634"/>
<dbReference type="KEGG" id="par:Psyc_1634"/>
<dbReference type="eggNOG" id="COG1211">
    <property type="taxonomic scope" value="Bacteria"/>
</dbReference>
<dbReference type="HOGENOM" id="CLU_061281_3_0_6"/>
<dbReference type="OrthoDB" id="9806837at2"/>
<dbReference type="UniPathway" id="UPA00056">
    <property type="reaction ID" value="UER00093"/>
</dbReference>
<dbReference type="Proteomes" id="UP000000546">
    <property type="component" value="Chromosome"/>
</dbReference>
<dbReference type="GO" id="GO:0050518">
    <property type="term" value="F:2-C-methyl-D-erythritol 4-phosphate cytidylyltransferase activity"/>
    <property type="evidence" value="ECO:0007669"/>
    <property type="project" value="UniProtKB-UniRule"/>
</dbReference>
<dbReference type="GO" id="GO:0019288">
    <property type="term" value="P:isopentenyl diphosphate biosynthetic process, methylerythritol 4-phosphate pathway"/>
    <property type="evidence" value="ECO:0007669"/>
    <property type="project" value="UniProtKB-UniRule"/>
</dbReference>
<dbReference type="CDD" id="cd02516">
    <property type="entry name" value="CDP-ME_synthetase"/>
    <property type="match status" value="1"/>
</dbReference>
<dbReference type="Gene3D" id="3.90.550.10">
    <property type="entry name" value="Spore Coat Polysaccharide Biosynthesis Protein SpsA, Chain A"/>
    <property type="match status" value="1"/>
</dbReference>
<dbReference type="HAMAP" id="MF_00108">
    <property type="entry name" value="IspD"/>
    <property type="match status" value="1"/>
</dbReference>
<dbReference type="InterPro" id="IPR001228">
    <property type="entry name" value="IspD"/>
</dbReference>
<dbReference type="InterPro" id="IPR034683">
    <property type="entry name" value="IspD/TarI"/>
</dbReference>
<dbReference type="InterPro" id="IPR050088">
    <property type="entry name" value="IspD/TarI_cytidylyltransf_bact"/>
</dbReference>
<dbReference type="InterPro" id="IPR018294">
    <property type="entry name" value="ISPD_synthase_CS"/>
</dbReference>
<dbReference type="InterPro" id="IPR029044">
    <property type="entry name" value="Nucleotide-diphossugar_trans"/>
</dbReference>
<dbReference type="PANTHER" id="PTHR32125">
    <property type="entry name" value="2-C-METHYL-D-ERYTHRITOL 4-PHOSPHATE CYTIDYLYLTRANSFERASE, CHLOROPLASTIC"/>
    <property type="match status" value="1"/>
</dbReference>
<dbReference type="PANTHER" id="PTHR32125:SF4">
    <property type="entry name" value="2-C-METHYL-D-ERYTHRITOL 4-PHOSPHATE CYTIDYLYLTRANSFERASE, CHLOROPLASTIC"/>
    <property type="match status" value="1"/>
</dbReference>
<dbReference type="Pfam" id="PF01128">
    <property type="entry name" value="IspD"/>
    <property type="match status" value="2"/>
</dbReference>
<dbReference type="SUPFAM" id="SSF53448">
    <property type="entry name" value="Nucleotide-diphospho-sugar transferases"/>
    <property type="match status" value="1"/>
</dbReference>
<dbReference type="PROSITE" id="PS01295">
    <property type="entry name" value="ISPD"/>
    <property type="match status" value="1"/>
</dbReference>
<name>ISPD_PSYA2</name>
<proteinExistence type="inferred from homology"/>
<evidence type="ECO:0000255" key="1">
    <source>
        <dbReference type="HAMAP-Rule" id="MF_00108"/>
    </source>
</evidence>
<feature type="chain" id="PRO_0000237813" description="2-C-methyl-D-erythritol 4-phosphate cytidylyltransferase">
    <location>
        <begin position="1"/>
        <end position="281"/>
    </location>
</feature>
<feature type="site" description="Transition state stabilizer" evidence="1">
    <location>
        <position position="28"/>
    </location>
</feature>
<feature type="site" description="Transition state stabilizer" evidence="1">
    <location>
        <position position="35"/>
    </location>
</feature>
<feature type="site" description="Positions MEP for the nucleophilic attack" evidence="1">
    <location>
        <position position="200"/>
    </location>
</feature>
<feature type="site" description="Positions MEP for the nucleophilic attack" evidence="1">
    <location>
        <position position="256"/>
    </location>
</feature>
<keyword id="KW-0414">Isoprene biosynthesis</keyword>
<keyword id="KW-0548">Nucleotidyltransferase</keyword>
<keyword id="KW-1185">Reference proteome</keyword>
<keyword id="KW-0808">Transferase</keyword>